<keyword id="KW-0028">Amino-acid biosynthesis</keyword>
<keyword id="KW-0963">Cytoplasm</keyword>
<keyword id="KW-0368">Histidine biosynthesis</keyword>
<keyword id="KW-0456">Lyase</keyword>
<keyword id="KW-1185">Reference proteome</keyword>
<gene>
    <name evidence="1" type="primary">hisB</name>
    <name type="ordered locus">STK_14610</name>
</gene>
<evidence type="ECO:0000255" key="1">
    <source>
        <dbReference type="HAMAP-Rule" id="MF_00076"/>
    </source>
</evidence>
<protein>
    <recommendedName>
        <fullName evidence="1">Imidazoleglycerol-phosphate dehydratase</fullName>
        <shortName evidence="1">IGPD</shortName>
        <ecNumber evidence="1">4.2.1.19</ecNumber>
    </recommendedName>
</protein>
<dbReference type="EC" id="4.2.1.19" evidence="1"/>
<dbReference type="EMBL" id="BA000023">
    <property type="protein sequence ID" value="BAB66532.1"/>
    <property type="molecule type" value="Genomic_DNA"/>
</dbReference>
<dbReference type="SMR" id="Q970Z1"/>
<dbReference type="STRING" id="273063.STK_14610"/>
<dbReference type="KEGG" id="sto:STK_14610"/>
<dbReference type="PATRIC" id="fig|273063.9.peg.1667"/>
<dbReference type="eggNOG" id="arCOG04398">
    <property type="taxonomic scope" value="Archaea"/>
</dbReference>
<dbReference type="OrthoDB" id="103579at2157"/>
<dbReference type="UniPathway" id="UPA00031">
    <property type="reaction ID" value="UER00011"/>
</dbReference>
<dbReference type="Proteomes" id="UP000001015">
    <property type="component" value="Chromosome"/>
</dbReference>
<dbReference type="GO" id="GO:0005737">
    <property type="term" value="C:cytoplasm"/>
    <property type="evidence" value="ECO:0007669"/>
    <property type="project" value="UniProtKB-SubCell"/>
</dbReference>
<dbReference type="GO" id="GO:0004424">
    <property type="term" value="F:imidazoleglycerol-phosphate dehydratase activity"/>
    <property type="evidence" value="ECO:0007669"/>
    <property type="project" value="UniProtKB-UniRule"/>
</dbReference>
<dbReference type="GO" id="GO:0000105">
    <property type="term" value="P:L-histidine biosynthetic process"/>
    <property type="evidence" value="ECO:0007669"/>
    <property type="project" value="UniProtKB-UniRule"/>
</dbReference>
<dbReference type="CDD" id="cd07914">
    <property type="entry name" value="IGPD"/>
    <property type="match status" value="1"/>
</dbReference>
<dbReference type="FunFam" id="3.30.230.40:FF:000003">
    <property type="entry name" value="Imidazoleglycerol-phosphate dehydratase HisB"/>
    <property type="match status" value="1"/>
</dbReference>
<dbReference type="Gene3D" id="3.30.230.40">
    <property type="entry name" value="Imidazole glycerol phosphate dehydratase, domain 1"/>
    <property type="match status" value="2"/>
</dbReference>
<dbReference type="HAMAP" id="MF_00076">
    <property type="entry name" value="HisB"/>
    <property type="match status" value="1"/>
</dbReference>
<dbReference type="InterPro" id="IPR038494">
    <property type="entry name" value="IGPD_sf"/>
</dbReference>
<dbReference type="InterPro" id="IPR000807">
    <property type="entry name" value="ImidazoleglycerolP_deHydtase"/>
</dbReference>
<dbReference type="InterPro" id="IPR020565">
    <property type="entry name" value="ImidazoleglycerP_deHydtase_CS"/>
</dbReference>
<dbReference type="InterPro" id="IPR020568">
    <property type="entry name" value="Ribosomal_Su5_D2-typ_SF"/>
</dbReference>
<dbReference type="NCBIfam" id="NF002114">
    <property type="entry name" value="PRK00951.2-4"/>
    <property type="match status" value="1"/>
</dbReference>
<dbReference type="NCBIfam" id="NF010121">
    <property type="entry name" value="PRK13598.1"/>
    <property type="match status" value="1"/>
</dbReference>
<dbReference type="PANTHER" id="PTHR23133:SF2">
    <property type="entry name" value="IMIDAZOLEGLYCEROL-PHOSPHATE DEHYDRATASE"/>
    <property type="match status" value="1"/>
</dbReference>
<dbReference type="PANTHER" id="PTHR23133">
    <property type="entry name" value="IMIDAZOLEGLYCEROL-PHOSPHATE DEHYDRATASE HIS7"/>
    <property type="match status" value="1"/>
</dbReference>
<dbReference type="Pfam" id="PF00475">
    <property type="entry name" value="IGPD"/>
    <property type="match status" value="1"/>
</dbReference>
<dbReference type="SUPFAM" id="SSF54211">
    <property type="entry name" value="Ribosomal protein S5 domain 2-like"/>
    <property type="match status" value="2"/>
</dbReference>
<dbReference type="PROSITE" id="PS00955">
    <property type="entry name" value="IGP_DEHYDRATASE_2"/>
    <property type="match status" value="1"/>
</dbReference>
<accession>Q970Z1</accession>
<reference key="1">
    <citation type="journal article" date="2001" name="DNA Res.">
        <title>Complete genome sequence of an aerobic thermoacidophilic Crenarchaeon, Sulfolobus tokodaii strain7.</title>
        <authorList>
            <person name="Kawarabayasi Y."/>
            <person name="Hino Y."/>
            <person name="Horikawa H."/>
            <person name="Jin-no K."/>
            <person name="Takahashi M."/>
            <person name="Sekine M."/>
            <person name="Baba S."/>
            <person name="Ankai A."/>
            <person name="Kosugi H."/>
            <person name="Hosoyama A."/>
            <person name="Fukui S."/>
            <person name="Nagai Y."/>
            <person name="Nishijima K."/>
            <person name="Otsuka R."/>
            <person name="Nakazawa H."/>
            <person name="Takamiya M."/>
            <person name="Kato Y."/>
            <person name="Yoshizawa T."/>
            <person name="Tanaka T."/>
            <person name="Kudoh Y."/>
            <person name="Yamazaki J."/>
            <person name="Kushida N."/>
            <person name="Oguchi A."/>
            <person name="Aoki K."/>
            <person name="Masuda S."/>
            <person name="Yanagii M."/>
            <person name="Nishimura M."/>
            <person name="Yamagishi A."/>
            <person name="Oshima T."/>
            <person name="Kikuchi H."/>
        </authorList>
    </citation>
    <scope>NUCLEOTIDE SEQUENCE [LARGE SCALE GENOMIC DNA]</scope>
    <source>
        <strain>DSM 16993 / JCM 10545 / NBRC 100140 / 7</strain>
    </source>
</reference>
<organism>
    <name type="scientific">Sulfurisphaera tokodaii (strain DSM 16993 / JCM 10545 / NBRC 100140 / 7)</name>
    <name type="common">Sulfolobus tokodaii</name>
    <dbReference type="NCBI Taxonomy" id="273063"/>
    <lineage>
        <taxon>Archaea</taxon>
        <taxon>Thermoproteota</taxon>
        <taxon>Thermoprotei</taxon>
        <taxon>Sulfolobales</taxon>
        <taxon>Sulfolobaceae</taxon>
        <taxon>Sulfurisphaera</taxon>
    </lineage>
</organism>
<comment type="catalytic activity">
    <reaction evidence="1">
        <text>D-erythro-1-(imidazol-4-yl)glycerol 3-phosphate = 3-(imidazol-4-yl)-2-oxopropyl phosphate + H2O</text>
        <dbReference type="Rhea" id="RHEA:11040"/>
        <dbReference type="ChEBI" id="CHEBI:15377"/>
        <dbReference type="ChEBI" id="CHEBI:57766"/>
        <dbReference type="ChEBI" id="CHEBI:58278"/>
        <dbReference type="EC" id="4.2.1.19"/>
    </reaction>
</comment>
<comment type="pathway">
    <text evidence="1">Amino-acid biosynthesis; L-histidine biosynthesis; L-histidine from 5-phospho-alpha-D-ribose 1-diphosphate: step 6/9.</text>
</comment>
<comment type="subcellular location">
    <subcellularLocation>
        <location evidence="1">Cytoplasm</location>
    </subcellularLocation>
</comment>
<comment type="similarity">
    <text evidence="1">Belongs to the imidazoleglycerol-phosphate dehydratase family.</text>
</comment>
<feature type="chain" id="PRO_0000158198" description="Imidazoleglycerol-phosphate dehydratase">
    <location>
        <begin position="1"/>
        <end position="194"/>
    </location>
</feature>
<name>HIS7_SULTO</name>
<sequence length="194" mass="22015">MSTRSVRKIRETKETKIELYLDIDKKGEVKVSTPVNFLNHMLSTLFYYMNSTATLIAEDKQNFDDHHVVEDTAIVIGEAFKEALGDKKGIRRFSHQIIPMDDALVLVAVDISGRGVSNIELNLERDEIGGLATENIIHFFQTFSYNSGVNMHIIQLRGWNTHHVIEASFKGLGFSLYEASRIVYEETYSLKGSL</sequence>
<proteinExistence type="inferred from homology"/>